<feature type="chain" id="PRO_0000105621" description="HTH-type transcriptional regulator DsdC">
    <location>
        <begin position="1"/>
        <end position="311"/>
    </location>
</feature>
<feature type="domain" description="HTH lysR-type" evidence="1">
    <location>
        <begin position="15"/>
        <end position="72"/>
    </location>
</feature>
<feature type="DNA-binding region" description="H-T-H motif" evidence="1">
    <location>
        <begin position="32"/>
        <end position="51"/>
    </location>
</feature>
<feature type="sequence conflict" description="In Ref. 1; CAA62931." evidence="4" ref="1">
    <original>A</original>
    <variation>R</variation>
    <location>
        <position position="159"/>
    </location>
</feature>
<accession>P46068</accession>
<accession>P77443</accession>
<proteinExistence type="evidence at transcript level"/>
<keyword id="KW-0010">Activator</keyword>
<keyword id="KW-0238">DNA-binding</keyword>
<keyword id="KW-1185">Reference proteome</keyword>
<keyword id="KW-0804">Transcription</keyword>
<keyword id="KW-0805">Transcription regulation</keyword>
<gene>
    <name evidence="3" type="primary">dsdC</name>
    <name type="ordered locus">b2364</name>
    <name type="ordered locus">JW2361</name>
</gene>
<sequence>MEPLREIRNRLLNGWQLSKMHTFEVAARHQSFALAAEELSLSPSAVSHRINQLEEELGIQLFVRSHRKVELTHEGKRVYWALKSSLDTLNQEILDIKNQELSGTLTLYSRPSIAQCWLVPALGDFTRRYPSISLTVLTGNDNVNLQRAGIDLAIYFDDAPSAQLTHHFLMDEEILPVCSPEYAQRHALTNTVINLCHCTLLHDRQAWSNDSGTDEWHSWAQHYAVNLPTSSGIGFDRSDLAVIAAMNHIGVAMGRKRLVQKRLASGELVAPFGDMTVKCHQHYYITTLPGRQWPKIEAFIIWLREQVKTTS</sequence>
<dbReference type="EMBL" id="X91821">
    <property type="protein sequence ID" value="CAA62931.1"/>
    <property type="molecule type" value="Genomic_DNA"/>
</dbReference>
<dbReference type="EMBL" id="U00096">
    <property type="protein sequence ID" value="AAC75423.1"/>
    <property type="molecule type" value="Genomic_DNA"/>
</dbReference>
<dbReference type="EMBL" id="AP009048">
    <property type="protein sequence ID" value="BAA16224.1"/>
    <property type="molecule type" value="Genomic_DNA"/>
</dbReference>
<dbReference type="EMBL" id="X86379">
    <property type="status" value="NOT_ANNOTATED_CDS"/>
    <property type="molecule type" value="Genomic_DNA"/>
</dbReference>
<dbReference type="PIR" id="A65010">
    <property type="entry name" value="A65010"/>
</dbReference>
<dbReference type="RefSeq" id="NP_416865.1">
    <property type="nucleotide sequence ID" value="NC_000913.3"/>
</dbReference>
<dbReference type="RefSeq" id="WP_001326971.1">
    <property type="nucleotide sequence ID" value="NZ_LN832404.1"/>
</dbReference>
<dbReference type="SMR" id="P46068"/>
<dbReference type="BioGRID" id="4260553">
    <property type="interactions" value="90"/>
</dbReference>
<dbReference type="DIP" id="DIP-9480N"/>
<dbReference type="FunCoup" id="P46068">
    <property type="interactions" value="19"/>
</dbReference>
<dbReference type="IntAct" id="P46068">
    <property type="interactions" value="5"/>
</dbReference>
<dbReference type="STRING" id="511145.b2364"/>
<dbReference type="PaxDb" id="511145-b2364"/>
<dbReference type="EnsemblBacteria" id="AAC75423">
    <property type="protein sequence ID" value="AAC75423"/>
    <property type="gene ID" value="b2364"/>
</dbReference>
<dbReference type="GeneID" id="948828"/>
<dbReference type="KEGG" id="ecj:JW2361"/>
<dbReference type="KEGG" id="eco:b2364"/>
<dbReference type="KEGG" id="ecoc:C3026_13150"/>
<dbReference type="PATRIC" id="fig|1411691.4.peg.4365"/>
<dbReference type="EchoBASE" id="EB2953"/>
<dbReference type="eggNOG" id="COG0583">
    <property type="taxonomic scope" value="Bacteria"/>
</dbReference>
<dbReference type="HOGENOM" id="CLU_039613_37_0_6"/>
<dbReference type="InParanoid" id="P46068"/>
<dbReference type="OMA" id="NHVGVAM"/>
<dbReference type="OrthoDB" id="5526340at2"/>
<dbReference type="PhylomeDB" id="P46068"/>
<dbReference type="BioCyc" id="EcoCyc:PD00297"/>
<dbReference type="PRO" id="PR:P46068"/>
<dbReference type="Proteomes" id="UP000000625">
    <property type="component" value="Chromosome"/>
</dbReference>
<dbReference type="GO" id="GO:0003700">
    <property type="term" value="F:DNA-binding transcription factor activity"/>
    <property type="evidence" value="ECO:0000318"/>
    <property type="project" value="GO_Central"/>
</dbReference>
<dbReference type="GO" id="GO:0043565">
    <property type="term" value="F:sequence-specific DNA binding"/>
    <property type="evidence" value="ECO:0000318"/>
    <property type="project" value="GO_Central"/>
</dbReference>
<dbReference type="GO" id="GO:0006351">
    <property type="term" value="P:DNA-templated transcription"/>
    <property type="evidence" value="ECO:0000318"/>
    <property type="project" value="GO_Central"/>
</dbReference>
<dbReference type="CDD" id="cd08432">
    <property type="entry name" value="PBP2_GcdR_TrpI_HvrB_AmpR_like"/>
    <property type="match status" value="1"/>
</dbReference>
<dbReference type="FunFam" id="3.40.190.10:FF:000135">
    <property type="entry name" value="DNA-binding transcriptional regulator DsdC"/>
    <property type="match status" value="1"/>
</dbReference>
<dbReference type="FunFam" id="1.10.10.10:FF:000038">
    <property type="entry name" value="Glycine cleavage system transcriptional activator"/>
    <property type="match status" value="1"/>
</dbReference>
<dbReference type="Gene3D" id="3.40.190.10">
    <property type="entry name" value="Periplasmic binding protein-like II"/>
    <property type="match status" value="2"/>
</dbReference>
<dbReference type="Gene3D" id="1.10.10.10">
    <property type="entry name" value="Winged helix-like DNA-binding domain superfamily/Winged helix DNA-binding domain"/>
    <property type="match status" value="1"/>
</dbReference>
<dbReference type="InterPro" id="IPR011781">
    <property type="entry name" value="DsdC"/>
</dbReference>
<dbReference type="InterPro" id="IPR005119">
    <property type="entry name" value="LysR_subst-bd"/>
</dbReference>
<dbReference type="InterPro" id="IPR000847">
    <property type="entry name" value="Tscrpt_reg_HTH_LysR"/>
</dbReference>
<dbReference type="InterPro" id="IPR036388">
    <property type="entry name" value="WH-like_DNA-bd_sf"/>
</dbReference>
<dbReference type="InterPro" id="IPR036390">
    <property type="entry name" value="WH_DNA-bd_sf"/>
</dbReference>
<dbReference type="NCBIfam" id="TIGR02036">
    <property type="entry name" value="dsdC"/>
    <property type="match status" value="1"/>
</dbReference>
<dbReference type="NCBIfam" id="NF007491">
    <property type="entry name" value="PRK10086.1"/>
    <property type="match status" value="1"/>
</dbReference>
<dbReference type="PANTHER" id="PTHR30537">
    <property type="entry name" value="HTH-TYPE TRANSCRIPTIONAL REGULATOR"/>
    <property type="match status" value="1"/>
</dbReference>
<dbReference type="PANTHER" id="PTHR30537:SF32">
    <property type="entry name" value="HTH-TYPE TRANSCRIPTIONAL REGULATOR DSDC"/>
    <property type="match status" value="1"/>
</dbReference>
<dbReference type="Pfam" id="PF00126">
    <property type="entry name" value="HTH_1"/>
    <property type="match status" value="1"/>
</dbReference>
<dbReference type="Pfam" id="PF03466">
    <property type="entry name" value="LysR_substrate"/>
    <property type="match status" value="1"/>
</dbReference>
<dbReference type="PRINTS" id="PR00039">
    <property type="entry name" value="HTHLYSR"/>
</dbReference>
<dbReference type="SUPFAM" id="SSF53850">
    <property type="entry name" value="Periplasmic binding protein-like II"/>
    <property type="match status" value="1"/>
</dbReference>
<dbReference type="SUPFAM" id="SSF46785">
    <property type="entry name" value="Winged helix' DNA-binding domain"/>
    <property type="match status" value="1"/>
</dbReference>
<dbReference type="PROSITE" id="PS50931">
    <property type="entry name" value="HTH_LYSR"/>
    <property type="match status" value="1"/>
</dbReference>
<protein>
    <recommendedName>
        <fullName>HTH-type transcriptional regulator DsdC</fullName>
    </recommendedName>
    <alternativeName>
        <fullName>D-serine deaminase activator</fullName>
    </alternativeName>
</protein>
<comment type="function">
    <text evidence="2">Regulates the expression of the dsdX-dsdA operon.</text>
</comment>
<comment type="induction">
    <text evidence="2">By growth in D-serine.</text>
</comment>
<comment type="disruption phenotype">
    <text evidence="2">No longer induces the dsdX-dsdA operon.</text>
</comment>
<comment type="similarity">
    <text evidence="4">Belongs to the LysR transcriptional regulatory family.</text>
</comment>
<reference key="1">
    <citation type="journal article" date="1995" name="J. Bacteriol.">
        <title>Organization and transcriptional regulation of the Escherichia coli K-12 D-serine tolerance locus.</title>
        <authorList>
            <person name="Noerregaard-Madsen M."/>
            <person name="McFall E."/>
            <person name="Valentin-Hansen P."/>
        </authorList>
    </citation>
    <scope>NUCLEOTIDE SEQUENCE [GENOMIC DNA]</scope>
    <scope>FUNCTION</scope>
    <scope>INDUCTION BY D-SERINE</scope>
    <scope>DISRUPTION PHENOTYPE</scope>
    <source>
        <strain>K12</strain>
    </source>
</reference>
<reference key="2">
    <citation type="journal article" date="1997" name="DNA Res.">
        <title>Construction of a contiguous 874-kb sequence of the Escherichia coli-K12 genome corresponding to 50.0-68.8 min on the linkage map and analysis of its sequence features.</title>
        <authorList>
            <person name="Yamamoto Y."/>
            <person name="Aiba H."/>
            <person name="Baba T."/>
            <person name="Hayashi K."/>
            <person name="Inada T."/>
            <person name="Isono K."/>
            <person name="Itoh T."/>
            <person name="Kimura S."/>
            <person name="Kitagawa M."/>
            <person name="Makino K."/>
            <person name="Miki T."/>
            <person name="Mitsuhashi N."/>
            <person name="Mizobuchi K."/>
            <person name="Mori H."/>
            <person name="Nakade S."/>
            <person name="Nakamura Y."/>
            <person name="Nashimoto H."/>
            <person name="Oshima T."/>
            <person name="Oyama S."/>
            <person name="Saito N."/>
            <person name="Sampei G."/>
            <person name="Satoh Y."/>
            <person name="Sivasundaram S."/>
            <person name="Tagami H."/>
            <person name="Takahashi H."/>
            <person name="Takeda J."/>
            <person name="Takemoto K."/>
            <person name="Uehara K."/>
            <person name="Wada C."/>
            <person name="Yamagata S."/>
            <person name="Horiuchi T."/>
        </authorList>
    </citation>
    <scope>NUCLEOTIDE SEQUENCE [LARGE SCALE GENOMIC DNA]</scope>
    <source>
        <strain>K12 / W3110 / ATCC 27325 / DSM 5911</strain>
    </source>
</reference>
<reference key="3">
    <citation type="journal article" date="1997" name="Science">
        <title>The complete genome sequence of Escherichia coli K-12.</title>
        <authorList>
            <person name="Blattner F.R."/>
            <person name="Plunkett G. III"/>
            <person name="Bloch C.A."/>
            <person name="Perna N.T."/>
            <person name="Burland V."/>
            <person name="Riley M."/>
            <person name="Collado-Vides J."/>
            <person name="Glasner J.D."/>
            <person name="Rode C.K."/>
            <person name="Mayhew G.F."/>
            <person name="Gregor J."/>
            <person name="Davis N.W."/>
            <person name="Kirkpatrick H.A."/>
            <person name="Goeden M.A."/>
            <person name="Rose D.J."/>
            <person name="Mau B."/>
            <person name="Shao Y."/>
        </authorList>
    </citation>
    <scope>NUCLEOTIDE SEQUENCE [LARGE SCALE GENOMIC DNA]</scope>
    <source>
        <strain>K12 / MG1655 / ATCC 47076</strain>
    </source>
</reference>
<reference key="4">
    <citation type="journal article" date="2006" name="Mol. Syst. Biol.">
        <title>Highly accurate genome sequences of Escherichia coli K-12 strains MG1655 and W3110.</title>
        <authorList>
            <person name="Hayashi K."/>
            <person name="Morooka N."/>
            <person name="Yamamoto Y."/>
            <person name="Fujita K."/>
            <person name="Isono K."/>
            <person name="Choi S."/>
            <person name="Ohtsubo E."/>
            <person name="Baba T."/>
            <person name="Wanner B.L."/>
            <person name="Mori H."/>
            <person name="Horiuchi T."/>
        </authorList>
    </citation>
    <scope>NUCLEOTIDE SEQUENCE [LARGE SCALE GENOMIC DNA]</scope>
    <source>
        <strain>K12 / W3110 / ATCC 27325 / DSM 5911</strain>
    </source>
</reference>
<reference key="5">
    <citation type="submission" date="1995-04" db="EMBL/GenBank/DDBJ databases">
        <authorList>
            <person name="Brannigan J.A."/>
        </authorList>
    </citation>
    <scope>NUCLEOTIDE SEQUENCE [GENOMIC DNA] OF 1-53</scope>
    <source>
        <strain>K12</strain>
    </source>
</reference>
<name>DSDC_ECOLI</name>
<evidence type="ECO:0000255" key="1">
    <source>
        <dbReference type="PROSITE-ProRule" id="PRU00253"/>
    </source>
</evidence>
<evidence type="ECO:0000269" key="2">
    <source>
    </source>
</evidence>
<evidence type="ECO:0000303" key="3">
    <source>
    </source>
</evidence>
<evidence type="ECO:0000305" key="4"/>
<organism>
    <name type="scientific">Escherichia coli (strain K12)</name>
    <dbReference type="NCBI Taxonomy" id="83333"/>
    <lineage>
        <taxon>Bacteria</taxon>
        <taxon>Pseudomonadati</taxon>
        <taxon>Pseudomonadota</taxon>
        <taxon>Gammaproteobacteria</taxon>
        <taxon>Enterobacterales</taxon>
        <taxon>Enterobacteriaceae</taxon>
        <taxon>Escherichia</taxon>
    </lineage>
</organism>